<protein>
    <recommendedName>
        <fullName>Heat shock 70 kDa protein</fullName>
    </recommendedName>
    <alternativeName>
        <fullName>70 kDa heat shock protein</fullName>
    </alternativeName>
    <alternativeName>
        <fullName>HSP 70.1</fullName>
    </alternativeName>
</protein>
<name>HSP70_THEPA</name>
<proteinExistence type="evidence at transcript level"/>
<gene>
    <name type="ordered locus">TP02_0148</name>
</gene>
<comment type="similarity">
    <text evidence="2">Belongs to the heat shock protein 70 family.</text>
</comment>
<evidence type="ECO:0000256" key="1">
    <source>
        <dbReference type="SAM" id="MobiDB-lite"/>
    </source>
</evidence>
<evidence type="ECO:0000305" key="2"/>
<dbReference type="EMBL" id="U40190">
    <property type="protein sequence ID" value="AAB53893.1"/>
    <property type="molecule type" value="mRNA"/>
</dbReference>
<dbReference type="EMBL" id="AAGK01000002">
    <property type="protein sequence ID" value="EAN32434.1"/>
    <property type="molecule type" value="Genomic_DNA"/>
</dbReference>
<dbReference type="RefSeq" id="XP_764717.1">
    <property type="nucleotide sequence ID" value="XM_759624.1"/>
</dbReference>
<dbReference type="SMR" id="Q27031"/>
<dbReference type="FunCoup" id="Q27031">
    <property type="interactions" value="199"/>
</dbReference>
<dbReference type="STRING" id="5875.Q27031"/>
<dbReference type="EnsemblProtists" id="EAN32434">
    <property type="protein sequence ID" value="EAN32434"/>
    <property type="gene ID" value="TP02_0148"/>
</dbReference>
<dbReference type="GeneID" id="3502280"/>
<dbReference type="KEGG" id="tpv:TP02_0148"/>
<dbReference type="VEuPathDB" id="PiroplasmaDB:TpMuguga_02g00148"/>
<dbReference type="eggNOG" id="KOG0101">
    <property type="taxonomic scope" value="Eukaryota"/>
</dbReference>
<dbReference type="InParanoid" id="Q27031"/>
<dbReference type="OMA" id="AYTKNQD"/>
<dbReference type="Proteomes" id="UP000001949">
    <property type="component" value="Unassembled WGS sequence"/>
</dbReference>
<dbReference type="GO" id="GO:0005524">
    <property type="term" value="F:ATP binding"/>
    <property type="evidence" value="ECO:0007669"/>
    <property type="project" value="UniProtKB-KW"/>
</dbReference>
<dbReference type="GO" id="GO:0140662">
    <property type="term" value="F:ATP-dependent protein folding chaperone"/>
    <property type="evidence" value="ECO:0007669"/>
    <property type="project" value="InterPro"/>
</dbReference>
<dbReference type="CDD" id="cd10233">
    <property type="entry name" value="ASKHA_NBD_HSP70_HSPA1"/>
    <property type="match status" value="1"/>
</dbReference>
<dbReference type="FunFam" id="2.60.34.10:FF:000002">
    <property type="entry name" value="Heat shock 70 kDa"/>
    <property type="match status" value="1"/>
</dbReference>
<dbReference type="FunFam" id="3.90.640.10:FF:000002">
    <property type="entry name" value="Heat shock 70 kDa"/>
    <property type="match status" value="1"/>
</dbReference>
<dbReference type="FunFam" id="3.30.420.40:FF:000172">
    <property type="entry name" value="Heat shock 70 kDa protein"/>
    <property type="match status" value="1"/>
</dbReference>
<dbReference type="FunFam" id="3.30.30.30:FF:000001">
    <property type="entry name" value="heat shock 70 kDa protein-like"/>
    <property type="match status" value="1"/>
</dbReference>
<dbReference type="FunFam" id="3.30.420.40:FF:000026">
    <property type="entry name" value="Heat shock protein 70"/>
    <property type="match status" value="1"/>
</dbReference>
<dbReference type="Gene3D" id="1.20.1270.10">
    <property type="match status" value="1"/>
</dbReference>
<dbReference type="Gene3D" id="3.30.30.30">
    <property type="match status" value="1"/>
</dbReference>
<dbReference type="Gene3D" id="3.30.420.40">
    <property type="match status" value="2"/>
</dbReference>
<dbReference type="Gene3D" id="3.90.640.10">
    <property type="entry name" value="Actin, Chain A, domain 4"/>
    <property type="match status" value="1"/>
</dbReference>
<dbReference type="Gene3D" id="2.60.34.10">
    <property type="entry name" value="Substrate Binding Domain Of DNAk, Chain A, domain 1"/>
    <property type="match status" value="1"/>
</dbReference>
<dbReference type="InterPro" id="IPR043129">
    <property type="entry name" value="ATPase_NBD"/>
</dbReference>
<dbReference type="InterPro" id="IPR018181">
    <property type="entry name" value="Heat_shock_70_CS"/>
</dbReference>
<dbReference type="InterPro" id="IPR029048">
    <property type="entry name" value="HSP70_C_sf"/>
</dbReference>
<dbReference type="InterPro" id="IPR029047">
    <property type="entry name" value="HSP70_peptide-bd_sf"/>
</dbReference>
<dbReference type="InterPro" id="IPR013126">
    <property type="entry name" value="Hsp_70_fam"/>
</dbReference>
<dbReference type="NCBIfam" id="NF001413">
    <property type="entry name" value="PRK00290.1"/>
    <property type="match status" value="1"/>
</dbReference>
<dbReference type="PANTHER" id="PTHR19375">
    <property type="entry name" value="HEAT SHOCK PROTEIN 70KDA"/>
    <property type="match status" value="1"/>
</dbReference>
<dbReference type="Pfam" id="PF00012">
    <property type="entry name" value="HSP70"/>
    <property type="match status" value="1"/>
</dbReference>
<dbReference type="PRINTS" id="PR00301">
    <property type="entry name" value="HEATSHOCK70"/>
</dbReference>
<dbReference type="SUPFAM" id="SSF53067">
    <property type="entry name" value="Actin-like ATPase domain"/>
    <property type="match status" value="2"/>
</dbReference>
<dbReference type="SUPFAM" id="SSF100934">
    <property type="entry name" value="Heat shock protein 70kD (HSP70), C-terminal subdomain"/>
    <property type="match status" value="1"/>
</dbReference>
<dbReference type="SUPFAM" id="SSF100920">
    <property type="entry name" value="Heat shock protein 70kD (HSP70), peptide-binding domain"/>
    <property type="match status" value="1"/>
</dbReference>
<dbReference type="PROSITE" id="PS00297">
    <property type="entry name" value="HSP70_1"/>
    <property type="match status" value="1"/>
</dbReference>
<dbReference type="PROSITE" id="PS00329">
    <property type="entry name" value="HSP70_2"/>
    <property type="match status" value="1"/>
</dbReference>
<dbReference type="PROSITE" id="PS01036">
    <property type="entry name" value="HSP70_3"/>
    <property type="match status" value="1"/>
</dbReference>
<sequence>MTGPAIGIDLGTTYSCVAVYKDNNVEIIPNDQGNRTTPSYVAFTDTERLIGDAAKNQEARNPENTIFDAKRLIGRKFDDRTVQEDMKHWPFKVTNGPNGKPNIEVTFQGEKKTFHAEEISSMVLTKMKEIAEAFLGKSVKDVVITVPAYFNDSQRQATKDAGTIAGLNVMRIINEPTAAAIAYGLDKKGGGEKNVLIFDLGGGTFDVSILTIEDGIFEVKATAGDTHLGGEDFDNLLVEHCVRDFMRLNNGKNISSNKRALRRLRTHCERAKRVLSSSTQATIELDSLYEGIDYNTTISRARFEELCNEKFRSTLVPVEKALESSGLDKRSIHEVVLVGGSTRIPKIQTLIKNFFNGKEPCRSINPDEAVAYGAAVQAAILSGNQSEKIQELLLLDVAPLSLGLETAGGVMTVLIKRNTTIPTKKNQIFTTNEDRQEGVLIQVFEGERAMTKDNNLLGKFHLTGIAPAPRGVPQIEVTFDIDANGILNVTAMDKSTGKSEHVTITNDKGRLSQEEIDRMVEEAEKYKEEDEKRRKCVESKHKLENYCYSMKNTLSEDQVKQKLGADEVDNALNTITEALKWVETNQLAEHDEFEDKLKHVEGVCNPLVTKLYQSGGAPGAGPDMGAGFPGGAPPPSSSSGPTVEEVD</sequence>
<feature type="chain" id="PRO_0000232678" description="Heat shock 70 kDa protein">
    <location>
        <begin position="1"/>
        <end position="647"/>
    </location>
</feature>
<feature type="region of interest" description="Disordered" evidence="1">
    <location>
        <begin position="615"/>
        <end position="647"/>
    </location>
</feature>
<feature type="compositionally biased region" description="Gly residues" evidence="1">
    <location>
        <begin position="616"/>
        <end position="630"/>
    </location>
</feature>
<feature type="sequence conflict" description="In Ref. 1; AAB53893." evidence="2" ref="1">
    <original>E</original>
    <variation>K</variation>
    <location>
        <position position="445"/>
    </location>
</feature>
<reference key="1">
    <citation type="journal article" date="1997" name="Mol. Biochem. Parasitol.">
        <title>Molecular characterisation of a cognate 70 kDa heat shock protein of the protozoan Theileria parva.</title>
        <authorList>
            <person name="Daubenberger C."/>
            <person name="Heussler V."/>
            <person name="Gobright E."/>
            <person name="Wijngaard P."/>
            <person name="Clevers H.C."/>
            <person name="Wells C."/>
            <person name="Tsuji N."/>
            <person name="Musoke A."/>
            <person name="McKeever D."/>
        </authorList>
    </citation>
    <scope>NUCLEOTIDE SEQUENCE [MRNA]</scope>
    <source>
        <strain>Muguga</strain>
    </source>
</reference>
<reference key="2">
    <citation type="journal article" date="2005" name="Science">
        <title>Genome sequence of Theileria parva, a bovine pathogen that transforms lymphocytes.</title>
        <authorList>
            <person name="Gardner M.J."/>
            <person name="Bishop R."/>
            <person name="Shah T."/>
            <person name="de Villiers E.P."/>
            <person name="Carlton J.M."/>
            <person name="Hall N."/>
            <person name="Ren Q."/>
            <person name="Paulsen I.T."/>
            <person name="Pain A."/>
            <person name="Berriman M."/>
            <person name="Wilson R.J.M."/>
            <person name="Sato S."/>
            <person name="Ralph S.A."/>
            <person name="Mann D.J."/>
            <person name="Xiong Z."/>
            <person name="Shallom S.J."/>
            <person name="Weidman J."/>
            <person name="Jiang L."/>
            <person name="Lynn J."/>
            <person name="Weaver B."/>
            <person name="Shoaibi A."/>
            <person name="Domingo A.R."/>
            <person name="Wasawo D."/>
            <person name="Crabtree J."/>
            <person name="Wortman J.R."/>
            <person name="Haas B."/>
            <person name="Angiuoli S.V."/>
            <person name="Creasy T.H."/>
            <person name="Lu C."/>
            <person name="Suh B."/>
            <person name="Silva J.C."/>
            <person name="Utterback T.R."/>
            <person name="Feldblyum T.V."/>
            <person name="Pertea M."/>
            <person name="Allen J."/>
            <person name="Nierman W.C."/>
            <person name="Taracha E.L.N."/>
            <person name="Salzberg S.L."/>
            <person name="White O.R."/>
            <person name="Fitzhugh H.A."/>
            <person name="Morzaria S."/>
            <person name="Venter J.C."/>
            <person name="Fraser C.M."/>
            <person name="Nene V."/>
        </authorList>
    </citation>
    <scope>NUCLEOTIDE SEQUENCE [LARGE SCALE GENOMIC DNA]</scope>
    <source>
        <strain>Muguga</strain>
    </source>
</reference>
<keyword id="KW-0067">ATP-binding</keyword>
<keyword id="KW-0547">Nucleotide-binding</keyword>
<keyword id="KW-1185">Reference proteome</keyword>
<keyword id="KW-0346">Stress response</keyword>
<accession>Q27031</accession>
<accession>Q4N5Y9</accession>
<organism>
    <name type="scientific">Theileria parva</name>
    <name type="common">East coast fever infection agent</name>
    <dbReference type="NCBI Taxonomy" id="5875"/>
    <lineage>
        <taxon>Eukaryota</taxon>
        <taxon>Sar</taxon>
        <taxon>Alveolata</taxon>
        <taxon>Apicomplexa</taxon>
        <taxon>Aconoidasida</taxon>
        <taxon>Piroplasmida</taxon>
        <taxon>Theileriidae</taxon>
        <taxon>Theileria</taxon>
    </lineage>
</organism>